<sequence length="302" mass="35176">MDQKRLTHLRQLEAESIHIIREVAAEFANPVMLYSIGKDSSVMLHLARKAFYPGTLPFPLLHVDTGWKFREMYAFRDRTANAYGCELLVHKNPEGVAMGINPFVHGSAKHTDIMKTEGLKQALNKYGFDAAFGGARRDEEKSRAKERIYSFRDRFHRWDPKNQRPELWRNYNGQINKGESIRVFPLSNWTEQDIWQYIWLENIDIVPLYLAAERPVLERDGMLMMVDDDRIDLQPGEVIKKRMVRFRTLGCWPLTGAVESHAQTLPEIIEEMLVSTTSERQGRMIDRDQAGSMELKKRQGYF</sequence>
<comment type="function">
    <text evidence="1">With CysN forms the ATP sulfurylase (ATPS) that catalyzes the adenylation of sulfate producing adenosine 5'-phosphosulfate (APS) and diphosphate, the first enzymatic step in sulfur assimilation pathway. APS synthesis involves the formation of a high-energy phosphoric-sulfuric acid anhydride bond driven by GTP hydrolysis by CysN coupled to ATP hydrolysis by CysD.</text>
</comment>
<comment type="catalytic activity">
    <reaction evidence="1">
        <text>sulfate + ATP + H(+) = adenosine 5'-phosphosulfate + diphosphate</text>
        <dbReference type="Rhea" id="RHEA:18133"/>
        <dbReference type="ChEBI" id="CHEBI:15378"/>
        <dbReference type="ChEBI" id="CHEBI:16189"/>
        <dbReference type="ChEBI" id="CHEBI:30616"/>
        <dbReference type="ChEBI" id="CHEBI:33019"/>
        <dbReference type="ChEBI" id="CHEBI:58243"/>
        <dbReference type="EC" id="2.7.7.4"/>
    </reaction>
</comment>
<comment type="pathway">
    <text evidence="1">Sulfur metabolism; hydrogen sulfide biosynthesis; sulfite from sulfate: step 1/3.</text>
</comment>
<comment type="subunit">
    <text evidence="1">Heterodimer composed of CysD, the smaller subunit, and CysN.</text>
</comment>
<comment type="similarity">
    <text evidence="1">Belongs to the PAPS reductase family. CysD subfamily.</text>
</comment>
<evidence type="ECO:0000255" key="1">
    <source>
        <dbReference type="HAMAP-Rule" id="MF_00064"/>
    </source>
</evidence>
<accession>B4T462</accession>
<organism>
    <name type="scientific">Salmonella newport (strain SL254)</name>
    <dbReference type="NCBI Taxonomy" id="423368"/>
    <lineage>
        <taxon>Bacteria</taxon>
        <taxon>Pseudomonadati</taxon>
        <taxon>Pseudomonadota</taxon>
        <taxon>Gammaproteobacteria</taxon>
        <taxon>Enterobacterales</taxon>
        <taxon>Enterobacteriaceae</taxon>
        <taxon>Salmonella</taxon>
    </lineage>
</organism>
<proteinExistence type="inferred from homology"/>
<feature type="chain" id="PRO_1000092223" description="Sulfate adenylyltransferase subunit 2">
    <location>
        <begin position="1"/>
        <end position="302"/>
    </location>
</feature>
<name>CYSD_SALNS</name>
<dbReference type="EC" id="2.7.7.4" evidence="1"/>
<dbReference type="EMBL" id="CP001113">
    <property type="protein sequence ID" value="ACF62195.1"/>
    <property type="molecule type" value="Genomic_DNA"/>
</dbReference>
<dbReference type="RefSeq" id="WP_000372384.1">
    <property type="nucleotide sequence ID" value="NZ_CCMR01000001.1"/>
</dbReference>
<dbReference type="SMR" id="B4T462"/>
<dbReference type="KEGG" id="see:SNSL254_A3141"/>
<dbReference type="HOGENOM" id="CLU_043026_0_0_6"/>
<dbReference type="UniPathway" id="UPA00140">
    <property type="reaction ID" value="UER00204"/>
</dbReference>
<dbReference type="Proteomes" id="UP000008824">
    <property type="component" value="Chromosome"/>
</dbReference>
<dbReference type="GO" id="GO:0005524">
    <property type="term" value="F:ATP binding"/>
    <property type="evidence" value="ECO:0007669"/>
    <property type="project" value="UniProtKB-KW"/>
</dbReference>
<dbReference type="GO" id="GO:0004781">
    <property type="term" value="F:sulfate adenylyltransferase (ATP) activity"/>
    <property type="evidence" value="ECO:0007669"/>
    <property type="project" value="UniProtKB-UniRule"/>
</dbReference>
<dbReference type="GO" id="GO:0070814">
    <property type="term" value="P:hydrogen sulfide biosynthetic process"/>
    <property type="evidence" value="ECO:0007669"/>
    <property type="project" value="UniProtKB-UniRule"/>
</dbReference>
<dbReference type="GO" id="GO:0000103">
    <property type="term" value="P:sulfate assimilation"/>
    <property type="evidence" value="ECO:0007669"/>
    <property type="project" value="UniProtKB-UniRule"/>
</dbReference>
<dbReference type="CDD" id="cd23946">
    <property type="entry name" value="Sulfate_adenylyltransferase_2"/>
    <property type="match status" value="1"/>
</dbReference>
<dbReference type="FunFam" id="3.40.50.620:FF:000002">
    <property type="entry name" value="Sulfate adenylyltransferase subunit 2"/>
    <property type="match status" value="1"/>
</dbReference>
<dbReference type="Gene3D" id="3.40.50.620">
    <property type="entry name" value="HUPs"/>
    <property type="match status" value="1"/>
</dbReference>
<dbReference type="HAMAP" id="MF_00064">
    <property type="entry name" value="Sulf_adenylyltr_sub2"/>
    <property type="match status" value="1"/>
</dbReference>
<dbReference type="InterPro" id="IPR002500">
    <property type="entry name" value="PAPS_reduct_dom"/>
</dbReference>
<dbReference type="InterPro" id="IPR014729">
    <property type="entry name" value="Rossmann-like_a/b/a_fold"/>
</dbReference>
<dbReference type="InterPro" id="IPR011784">
    <property type="entry name" value="SO4_adenylTrfase_ssu"/>
</dbReference>
<dbReference type="InterPro" id="IPR050128">
    <property type="entry name" value="Sulfate_adenylyltrnsfr_sub2"/>
</dbReference>
<dbReference type="NCBIfam" id="TIGR02039">
    <property type="entry name" value="CysD"/>
    <property type="match status" value="1"/>
</dbReference>
<dbReference type="NCBIfam" id="NF003587">
    <property type="entry name" value="PRK05253.1"/>
    <property type="match status" value="1"/>
</dbReference>
<dbReference type="NCBIfam" id="NF009214">
    <property type="entry name" value="PRK12563.1"/>
    <property type="match status" value="1"/>
</dbReference>
<dbReference type="PANTHER" id="PTHR43196">
    <property type="entry name" value="SULFATE ADENYLYLTRANSFERASE SUBUNIT 2"/>
    <property type="match status" value="1"/>
</dbReference>
<dbReference type="PANTHER" id="PTHR43196:SF1">
    <property type="entry name" value="SULFATE ADENYLYLTRANSFERASE SUBUNIT 2"/>
    <property type="match status" value="1"/>
</dbReference>
<dbReference type="Pfam" id="PF01507">
    <property type="entry name" value="PAPS_reduct"/>
    <property type="match status" value="1"/>
</dbReference>
<dbReference type="PIRSF" id="PIRSF002936">
    <property type="entry name" value="CysDAde_trans"/>
    <property type="match status" value="1"/>
</dbReference>
<dbReference type="SUPFAM" id="SSF52402">
    <property type="entry name" value="Adenine nucleotide alpha hydrolases-like"/>
    <property type="match status" value="1"/>
</dbReference>
<gene>
    <name evidence="1" type="primary">cysD</name>
    <name type="ordered locus">SNSL254_A3141</name>
</gene>
<keyword id="KW-0067">ATP-binding</keyword>
<keyword id="KW-0547">Nucleotide-binding</keyword>
<keyword id="KW-0548">Nucleotidyltransferase</keyword>
<keyword id="KW-0808">Transferase</keyword>
<protein>
    <recommendedName>
        <fullName evidence="1">Sulfate adenylyltransferase subunit 2</fullName>
        <ecNumber evidence="1">2.7.7.4</ecNumber>
    </recommendedName>
    <alternativeName>
        <fullName evidence="1">ATP-sulfurylase small subunit</fullName>
    </alternativeName>
    <alternativeName>
        <fullName evidence="1">Sulfate adenylate transferase</fullName>
        <shortName evidence="1">SAT</shortName>
    </alternativeName>
</protein>
<reference key="1">
    <citation type="journal article" date="2011" name="J. Bacteriol.">
        <title>Comparative genomics of 28 Salmonella enterica isolates: evidence for CRISPR-mediated adaptive sublineage evolution.</title>
        <authorList>
            <person name="Fricke W.F."/>
            <person name="Mammel M.K."/>
            <person name="McDermott P.F."/>
            <person name="Tartera C."/>
            <person name="White D.G."/>
            <person name="Leclerc J.E."/>
            <person name="Ravel J."/>
            <person name="Cebula T.A."/>
        </authorList>
    </citation>
    <scope>NUCLEOTIDE SEQUENCE [LARGE SCALE GENOMIC DNA]</scope>
    <source>
        <strain>SL254</strain>
    </source>
</reference>